<organism>
    <name type="scientific">Heliocidaris crassispina</name>
    <name type="common">Sea urchin</name>
    <name type="synonym">Anthocidaris crassispina</name>
    <dbReference type="NCBI Taxonomy" id="1043166"/>
    <lineage>
        <taxon>Eukaryota</taxon>
        <taxon>Metazoa</taxon>
        <taxon>Echinodermata</taxon>
        <taxon>Eleutherozoa</taxon>
        <taxon>Echinozoa</taxon>
        <taxon>Echinoidea</taxon>
        <taxon>Euechinoidea</taxon>
        <taxon>Echinacea</taxon>
        <taxon>Camarodonta</taxon>
        <taxon>Echinidea</taxon>
        <taxon>Echinometridae</taxon>
        <taxon>Heliocidaris</taxon>
    </lineage>
</organism>
<name>DYL1_HELCR</name>
<comment type="subunit">
    <text>Consists of at least 3 heavy chains (alpha, beta and gamma), 2 intermediate chains and 8 light chains.</text>
</comment>
<comment type="subcellular location">
    <subcellularLocation>
        <location>Cytoplasm</location>
        <location>Cytoskeleton</location>
        <location>Flagellum axoneme</location>
    </subcellularLocation>
</comment>
<comment type="similarity">
    <text evidence="1">Belongs to the dynein light chain family.</text>
</comment>
<feature type="chain" id="PRO_0000195140" description="Dynein light chain LC6, flagellar outer arm">
    <location>
        <begin position="1"/>
        <end position="89"/>
    </location>
</feature>
<reference key="1">
    <citation type="journal article" date="1998" name="Gene">
        <title>A dynein light chain of sea urchin sperm flagella is a homolog of mouse Tctex 1, which is encoded by a gene of the t complex sterility locus.</title>
        <authorList>
            <person name="Kagami O."/>
            <person name="Gotoh M."/>
            <person name="Makino Y."/>
            <person name="Mohri H."/>
            <person name="Kamiya R."/>
            <person name="Ogawa K."/>
        </authorList>
    </citation>
    <scope>NUCLEOTIDE SEQUENCE [MRNA]</scope>
    <source>
        <tissue>Testis</tissue>
    </source>
</reference>
<accession>O02414</accession>
<dbReference type="EMBL" id="AB004830">
    <property type="protein sequence ID" value="BAA20525.1"/>
    <property type="molecule type" value="mRNA"/>
</dbReference>
<dbReference type="SMR" id="O02414"/>
<dbReference type="GO" id="GO:0005737">
    <property type="term" value="C:cytoplasm"/>
    <property type="evidence" value="ECO:0007669"/>
    <property type="project" value="UniProtKB-KW"/>
</dbReference>
<dbReference type="GO" id="GO:0005868">
    <property type="term" value="C:cytoplasmic dynein complex"/>
    <property type="evidence" value="ECO:0007669"/>
    <property type="project" value="TreeGrafter"/>
</dbReference>
<dbReference type="GO" id="GO:0005874">
    <property type="term" value="C:microtubule"/>
    <property type="evidence" value="ECO:0007669"/>
    <property type="project" value="UniProtKB-KW"/>
</dbReference>
<dbReference type="GO" id="GO:0031514">
    <property type="term" value="C:motile cilium"/>
    <property type="evidence" value="ECO:0007669"/>
    <property type="project" value="UniProtKB-KW"/>
</dbReference>
<dbReference type="GO" id="GO:0045505">
    <property type="term" value="F:dynein intermediate chain binding"/>
    <property type="evidence" value="ECO:0007669"/>
    <property type="project" value="TreeGrafter"/>
</dbReference>
<dbReference type="GO" id="GO:0035721">
    <property type="term" value="P:intraciliary retrograde transport"/>
    <property type="evidence" value="ECO:0007669"/>
    <property type="project" value="TreeGrafter"/>
</dbReference>
<dbReference type="GO" id="GO:0044458">
    <property type="term" value="P:motile cilium assembly"/>
    <property type="evidence" value="ECO:0007669"/>
    <property type="project" value="TreeGrafter"/>
</dbReference>
<dbReference type="CDD" id="cd21452">
    <property type="entry name" value="DLC-like_DYNLL1_DYNLL2"/>
    <property type="match status" value="1"/>
</dbReference>
<dbReference type="FunFam" id="3.30.740.10:FF:000001">
    <property type="entry name" value="Dynein light chain"/>
    <property type="match status" value="1"/>
</dbReference>
<dbReference type="Gene3D" id="3.30.740.10">
    <property type="entry name" value="Protein Inhibitor Of Neuronal Nitric Oxide Synthase"/>
    <property type="match status" value="1"/>
</dbReference>
<dbReference type="InterPro" id="IPR037177">
    <property type="entry name" value="DLC_sf"/>
</dbReference>
<dbReference type="InterPro" id="IPR019763">
    <property type="entry name" value="Dynein_light_1/2_CS"/>
</dbReference>
<dbReference type="InterPro" id="IPR001372">
    <property type="entry name" value="Dynein_light_chain_typ-1/2"/>
</dbReference>
<dbReference type="PANTHER" id="PTHR11886">
    <property type="entry name" value="DYNEIN LIGHT CHAIN"/>
    <property type="match status" value="1"/>
</dbReference>
<dbReference type="PANTHER" id="PTHR11886:SF35">
    <property type="entry name" value="DYNEIN LIGHT CHAIN"/>
    <property type="match status" value="1"/>
</dbReference>
<dbReference type="Pfam" id="PF01221">
    <property type="entry name" value="Dynein_light"/>
    <property type="match status" value="1"/>
</dbReference>
<dbReference type="SMART" id="SM01375">
    <property type="entry name" value="Dynein_light"/>
    <property type="match status" value="1"/>
</dbReference>
<dbReference type="SUPFAM" id="SSF54648">
    <property type="entry name" value="DLC"/>
    <property type="match status" value="1"/>
</dbReference>
<dbReference type="PROSITE" id="PS01239">
    <property type="entry name" value="DYNEIN_LIGHT_1"/>
    <property type="match status" value="1"/>
</dbReference>
<evidence type="ECO:0000305" key="1"/>
<protein>
    <recommendedName>
        <fullName>Dynein light chain LC6, flagellar outer arm</fullName>
    </recommendedName>
</protein>
<keyword id="KW-0966">Cell projection</keyword>
<keyword id="KW-0969">Cilium</keyword>
<keyword id="KW-0963">Cytoplasm</keyword>
<keyword id="KW-0206">Cytoskeleton</keyword>
<keyword id="KW-0243">Dynein</keyword>
<keyword id="KW-0282">Flagellum</keyword>
<keyword id="KW-0493">Microtubule</keyword>
<keyword id="KW-0505">Motor protein</keyword>
<proteinExistence type="inferred from homology"/>
<sequence length="89" mass="10326">MSERKAVIKNADMPEDMQQDAVDCATQALEKFNIEKDIAAYIKKEFDKKYNPTWHCIVGRNFGSYVTHETKHFIYFYLGQVAVLLFKSG</sequence>